<feature type="chain" id="PRO_0000410577" description="Putative DNA-directed RNA polymerase 008R">
    <location>
        <begin position="1"/>
        <end position="1293"/>
    </location>
</feature>
<feature type="DNA-binding region" evidence="1">
    <location>
        <begin position="270"/>
        <end position="339"/>
    </location>
</feature>
<feature type="region of interest" description="Disordered" evidence="2">
    <location>
        <begin position="354"/>
        <end position="390"/>
    </location>
</feature>
<feature type="region of interest" description="Alpha-amanitin binding" evidence="1">
    <location>
        <begin position="724"/>
        <end position="734"/>
    </location>
</feature>
<feature type="region of interest" description="Bridging helix" evidence="1">
    <location>
        <begin position="776"/>
        <end position="788"/>
    </location>
</feature>
<feature type="compositionally biased region" description="Basic and acidic residues" evidence="2">
    <location>
        <begin position="354"/>
        <end position="376"/>
    </location>
</feature>
<feature type="binding site" evidence="1">
    <location>
        <position position="61"/>
    </location>
    <ligand>
        <name>Zn(2+)</name>
        <dbReference type="ChEBI" id="CHEBI:29105"/>
        <label>1</label>
    </ligand>
</feature>
<feature type="binding site" evidence="1">
    <location>
        <position position="64"/>
    </location>
    <ligand>
        <name>Zn(2+)</name>
        <dbReference type="ChEBI" id="CHEBI:29105"/>
        <label>1</label>
    </ligand>
</feature>
<feature type="binding site" evidence="1">
    <location>
        <position position="71"/>
    </location>
    <ligand>
        <name>Zn(2+)</name>
        <dbReference type="ChEBI" id="CHEBI:29105"/>
        <label>1</label>
    </ligand>
</feature>
<feature type="binding site" evidence="1">
    <location>
        <position position="74"/>
    </location>
    <ligand>
        <name>Zn(2+)</name>
        <dbReference type="ChEBI" id="CHEBI:29105"/>
        <label>1</label>
    </ligand>
</feature>
<feature type="binding site" evidence="1">
    <location>
        <position position="99"/>
    </location>
    <ligand>
        <name>Zn(2+)</name>
        <dbReference type="ChEBI" id="CHEBI:29105"/>
        <label>2</label>
    </ligand>
</feature>
<feature type="binding site" evidence="1">
    <location>
        <position position="102"/>
    </location>
    <ligand>
        <name>Zn(2+)</name>
        <dbReference type="ChEBI" id="CHEBI:29105"/>
        <label>2</label>
    </ligand>
</feature>
<feature type="binding site" evidence="1">
    <location>
        <position position="123"/>
    </location>
    <ligand>
        <name>Zn(2+)</name>
        <dbReference type="ChEBI" id="CHEBI:29105"/>
        <label>2</label>
    </ligand>
</feature>
<feature type="binding site" evidence="1">
    <location>
        <position position="474"/>
    </location>
    <ligand>
        <name>Mg(2+)</name>
        <dbReference type="ChEBI" id="CHEBI:18420"/>
        <label>1</label>
        <note>catalytic</note>
    </ligand>
</feature>
<feature type="binding site" evidence="1">
    <location>
        <position position="474"/>
    </location>
    <ligand>
        <name>Mg(2+)</name>
        <dbReference type="ChEBI" id="CHEBI:18420"/>
        <label>2</label>
        <note>ligand shared with RPB2</note>
    </ligand>
</feature>
<feature type="binding site" evidence="1">
    <location>
        <position position="476"/>
    </location>
    <ligand>
        <name>Mg(2+)</name>
        <dbReference type="ChEBI" id="CHEBI:18420"/>
        <label>1</label>
        <note>catalytic</note>
    </ligand>
</feature>
<feature type="binding site" evidence="1">
    <location>
        <position position="476"/>
    </location>
    <ligand>
        <name>Mg(2+)</name>
        <dbReference type="ChEBI" id="CHEBI:18420"/>
        <label>2</label>
        <note>ligand shared with RPB2</note>
    </ligand>
</feature>
<feature type="binding site" evidence="1">
    <location>
        <position position="478"/>
    </location>
    <ligand>
        <name>Mg(2+)</name>
        <dbReference type="ChEBI" id="CHEBI:18420"/>
        <label>1</label>
        <note>catalytic</note>
    </ligand>
</feature>
<name>RPB1_FRG3G</name>
<reference key="1">
    <citation type="journal article" date="2004" name="Virology">
        <title>Comparative genomic analyses of frog virus 3, type species of the genus Ranavirus (family Iridoviridae).</title>
        <authorList>
            <person name="Tan W.G."/>
            <person name="Barkman T.J."/>
            <person name="Gregory Chinchar V."/>
            <person name="Essani K."/>
        </authorList>
    </citation>
    <scope>NUCLEOTIDE SEQUENCE [LARGE SCALE GENOMIC DNA]</scope>
</reference>
<sequence length="1293" mass="140807">MEMFASKSLQVEGLLFGVCSPEEILATSVVEVTKSCLKAETGSVYDPRMGSAGVDDDDALCPTCENTGRECPGHFGHIELAKPVVLFYKETVAWLKRCCHVCGTVGNEPRPFFFAPYSACNACGAQRPLVRLVDAHDPCAIRVTVRRKDGEPETMPPELILATLDRVRDSDVDRVLGRGKGSHVRFHPRRLVMTRMPVLPPCCRPNARQWPDGAMQDDNLSVFVSQIVKVNQRIKALEPDNPAVEGLVAQLRLKTLCFVDNTKGKVMHATNRKPMAGIKERIGKKGGLLRQNIMGKRRNQTGRSVVGPDGTLEVDEVGVPEAIADNLTVPVMVTPFNVSSLEAMMRDGRVSSVEMRDGTVHRPSEWRPSHGDHMETADGSPLGRVTRPSYDARDPSVVLRSWKTGETVTRPPPFSWPKLEPGMTVTRCLVDGDPVALNRQPTLHRNSMLGMRVKRLPGKTIRLNLSVTSGFNMDFDGDEGNLYLPQGPQARSETMLLMNPKSVIMSARGPHAEVSLVQDGVLGCHLMSLNSEIPCPPEELATCLMEVHGCEGWDVRDVEKGATPRDLLSSVLPSTLTVDCGGGCRIESGKIVSGHLTKSAVKKIVRAVCLENGGDAAGKLVDKLQFLTNAWLSHRPFSVGYSDCLTERPEETVRMVADAVCSKILEAEAADDEDGVSVALCGARDRGQAVTCAALTPDNRMAVMSRAQSKGDMFNLTQIAGLLGQQYVGGSRPGKEIDGGRRSLPHYPRVWDLEQTTLKYESRGFVRSSFLKGLNPREVFFHAKSGREGMISTSQMTGVTGYAERKMVKLNEDLVSAYDGTVRDAMGNVVQFVYGGHGMDPQRCWSDGCPVNFKTLAEECSSQECSSQISGLRSPAVTSVEEASLLVPVGLCPGAPDPVRESLFLKHASVILKGAEEHPCEDHSAWRERVARSYAAAVLCPGEAVGVLCAQSIGAKQTQQTLDTFHKAGVWLDDAGSVPFGELLGLSQKPMRRQCVVPLKVDPSTPGDEVRDLVGCSFVRRDLLDLLAVRPSTATVGKTASLELDPVKCFELRISPADVAYAVAEKFPPPHFDVSVSSFGVTLSWSVNYPVDNLFTGLFSVQVGGTPGVESYRLLRGRDGGWVAVTKGTNLGAFLCHPLADWERVRTDDVWDVYETLGLAAAKKRLYELMFSCVGDNLYPAHIKLLTDRMMRRGRPTPIDRYTMRTCEVGPLSRAAFEESLDILTGAGCTAETEHCAGAGARVAAGLPVRAGTGYMGLLCGKGFFDEPVVKVPDADGREYVDYSYSDDESFEW</sequence>
<dbReference type="EC" id="2.7.7.6"/>
<dbReference type="EMBL" id="AY548484">
    <property type="protein sequence ID" value="AAT09667.1"/>
    <property type="molecule type" value="Genomic_DNA"/>
</dbReference>
<dbReference type="RefSeq" id="YP_031586.1">
    <property type="nucleotide sequence ID" value="NC_005946.1"/>
</dbReference>
<dbReference type="SMR" id="Q6GZW7"/>
<dbReference type="KEGG" id="vg:2947780"/>
<dbReference type="Proteomes" id="UP000008770">
    <property type="component" value="Segment"/>
</dbReference>
<dbReference type="GO" id="GO:0000428">
    <property type="term" value="C:DNA-directed RNA polymerase complex"/>
    <property type="evidence" value="ECO:0007669"/>
    <property type="project" value="UniProtKB-KW"/>
</dbReference>
<dbReference type="GO" id="GO:0003677">
    <property type="term" value="F:DNA binding"/>
    <property type="evidence" value="ECO:0007669"/>
    <property type="project" value="UniProtKB-KW"/>
</dbReference>
<dbReference type="GO" id="GO:0003899">
    <property type="term" value="F:DNA-directed RNA polymerase activity"/>
    <property type="evidence" value="ECO:0007669"/>
    <property type="project" value="UniProtKB-EC"/>
</dbReference>
<dbReference type="GO" id="GO:0046872">
    <property type="term" value="F:metal ion binding"/>
    <property type="evidence" value="ECO:0007669"/>
    <property type="project" value="UniProtKB-KW"/>
</dbReference>
<dbReference type="GO" id="GO:0006351">
    <property type="term" value="P:DNA-templated transcription"/>
    <property type="evidence" value="ECO:0007669"/>
    <property type="project" value="InterPro"/>
</dbReference>
<dbReference type="Gene3D" id="1.10.132.30">
    <property type="match status" value="1"/>
</dbReference>
<dbReference type="Gene3D" id="1.10.150.390">
    <property type="match status" value="1"/>
</dbReference>
<dbReference type="Gene3D" id="2.40.40.20">
    <property type="match status" value="1"/>
</dbReference>
<dbReference type="Gene3D" id="6.10.250.2940">
    <property type="match status" value="1"/>
</dbReference>
<dbReference type="Gene3D" id="6.20.50.80">
    <property type="match status" value="1"/>
</dbReference>
<dbReference type="Gene3D" id="3.30.1490.180">
    <property type="entry name" value="RNA polymerase ii"/>
    <property type="match status" value="1"/>
</dbReference>
<dbReference type="Gene3D" id="4.10.860.120">
    <property type="entry name" value="RNA polymerase II, clamp domain"/>
    <property type="match status" value="1"/>
</dbReference>
<dbReference type="Gene3D" id="1.10.274.100">
    <property type="entry name" value="RNA polymerase Rpb1, domain 3"/>
    <property type="match status" value="1"/>
</dbReference>
<dbReference type="InterPro" id="IPR045867">
    <property type="entry name" value="DNA-dir_RpoC_beta_prime"/>
</dbReference>
<dbReference type="InterPro" id="IPR000722">
    <property type="entry name" value="RNA_pol_asu"/>
</dbReference>
<dbReference type="InterPro" id="IPR006592">
    <property type="entry name" value="RNA_pol_N"/>
</dbReference>
<dbReference type="InterPro" id="IPR007080">
    <property type="entry name" value="RNA_pol_Rpb1_1"/>
</dbReference>
<dbReference type="InterPro" id="IPR007066">
    <property type="entry name" value="RNA_pol_Rpb1_3"/>
</dbReference>
<dbReference type="InterPro" id="IPR042102">
    <property type="entry name" value="RNA_pol_Rpb1_3_sf"/>
</dbReference>
<dbReference type="InterPro" id="IPR007083">
    <property type="entry name" value="RNA_pol_Rpb1_4"/>
</dbReference>
<dbReference type="InterPro" id="IPR007081">
    <property type="entry name" value="RNA_pol_Rpb1_5"/>
</dbReference>
<dbReference type="InterPro" id="IPR044893">
    <property type="entry name" value="RNA_pol_Rpb1_clamp_domain"/>
</dbReference>
<dbReference type="InterPro" id="IPR038120">
    <property type="entry name" value="Rpb1_funnel_sf"/>
</dbReference>
<dbReference type="PANTHER" id="PTHR19376">
    <property type="entry name" value="DNA-DIRECTED RNA POLYMERASE"/>
    <property type="match status" value="1"/>
</dbReference>
<dbReference type="PANTHER" id="PTHR19376:SF37">
    <property type="entry name" value="DNA-DIRECTED RNA POLYMERASE II SUBUNIT RPB1"/>
    <property type="match status" value="1"/>
</dbReference>
<dbReference type="Pfam" id="PF04997">
    <property type="entry name" value="RNA_pol_Rpb1_1"/>
    <property type="match status" value="2"/>
</dbReference>
<dbReference type="Pfam" id="PF00623">
    <property type="entry name" value="RNA_pol_Rpb1_2"/>
    <property type="match status" value="2"/>
</dbReference>
<dbReference type="Pfam" id="PF04983">
    <property type="entry name" value="RNA_pol_Rpb1_3"/>
    <property type="match status" value="1"/>
</dbReference>
<dbReference type="Pfam" id="PF05000">
    <property type="entry name" value="RNA_pol_Rpb1_4"/>
    <property type="match status" value="1"/>
</dbReference>
<dbReference type="Pfam" id="PF04998">
    <property type="entry name" value="RNA_pol_Rpb1_5"/>
    <property type="match status" value="1"/>
</dbReference>
<dbReference type="SMART" id="SM00663">
    <property type="entry name" value="RPOLA_N"/>
    <property type="match status" value="1"/>
</dbReference>
<dbReference type="SUPFAM" id="SSF64484">
    <property type="entry name" value="beta and beta-prime subunits of DNA dependent RNA-polymerase"/>
    <property type="match status" value="1"/>
</dbReference>
<accession>Q6GZW7</accession>
<evidence type="ECO:0000250" key="1"/>
<evidence type="ECO:0000256" key="2">
    <source>
        <dbReference type="SAM" id="MobiDB-lite"/>
    </source>
</evidence>
<evidence type="ECO:0000305" key="3"/>
<organism>
    <name type="scientific">Frog virus 3 (isolate Goorha)</name>
    <name type="common">FV-3</name>
    <dbReference type="NCBI Taxonomy" id="654924"/>
    <lineage>
        <taxon>Viruses</taxon>
        <taxon>Varidnaviria</taxon>
        <taxon>Bamfordvirae</taxon>
        <taxon>Nucleocytoviricota</taxon>
        <taxon>Megaviricetes</taxon>
        <taxon>Pimascovirales</taxon>
        <taxon>Iridoviridae</taxon>
        <taxon>Alphairidovirinae</taxon>
        <taxon>Ranavirus</taxon>
        <taxon>Frog virus 3</taxon>
    </lineage>
</organism>
<proteinExistence type="inferred from homology"/>
<protein>
    <recommendedName>
        <fullName>Putative DNA-directed RNA polymerase 008R</fullName>
        <ecNumber>2.7.7.6</ecNumber>
    </recommendedName>
</protein>
<organismHost>
    <name type="scientific">Dryophytes versicolor</name>
    <name type="common">chameleon treefrog</name>
    <dbReference type="NCBI Taxonomy" id="30343"/>
</organismHost>
<organismHost>
    <name type="scientific">Lithobates pipiens</name>
    <name type="common">Northern leopard frog</name>
    <name type="synonym">Rana pipiens</name>
    <dbReference type="NCBI Taxonomy" id="8404"/>
</organismHost>
<organismHost>
    <name type="scientific">Lithobates sylvaticus</name>
    <name type="common">Wood frog</name>
    <name type="synonym">Rana sylvatica</name>
    <dbReference type="NCBI Taxonomy" id="45438"/>
</organismHost>
<organismHost>
    <name type="scientific">Notophthalmus viridescens</name>
    <name type="common">Eastern newt</name>
    <name type="synonym">Triturus viridescens</name>
    <dbReference type="NCBI Taxonomy" id="8316"/>
</organismHost>
<comment type="function">
    <text evidence="1">Component of the DNA-dependent RNA polymerase that catalyzes the transcription of DNA into RNA using the four ribonucleoside triphosphates as substrates. Largest and catalytic component of RNA polymerase II which synthesizes mRNA precursors and many functional non-coding RNAs. Forms the polymerase active center together with the second largest subunit (By similarity).</text>
</comment>
<comment type="catalytic activity">
    <reaction>
        <text>RNA(n) + a ribonucleoside 5'-triphosphate = RNA(n+1) + diphosphate</text>
        <dbReference type="Rhea" id="RHEA:21248"/>
        <dbReference type="Rhea" id="RHEA-COMP:14527"/>
        <dbReference type="Rhea" id="RHEA-COMP:17342"/>
        <dbReference type="ChEBI" id="CHEBI:33019"/>
        <dbReference type="ChEBI" id="CHEBI:61557"/>
        <dbReference type="ChEBI" id="CHEBI:140395"/>
        <dbReference type="EC" id="2.7.7.6"/>
    </reaction>
</comment>
<comment type="similarity">
    <text evidence="3">Belongs to the RNA polymerase beta' chain family.</text>
</comment>
<gene>
    <name type="ORF">FV3-008R</name>
</gene>
<keyword id="KW-0238">DNA-binding</keyword>
<keyword id="KW-0240">DNA-directed RNA polymerase</keyword>
<keyword id="KW-0460">Magnesium</keyword>
<keyword id="KW-0479">Metal-binding</keyword>
<keyword id="KW-0548">Nucleotidyltransferase</keyword>
<keyword id="KW-1185">Reference proteome</keyword>
<keyword id="KW-0804">Transcription</keyword>
<keyword id="KW-0808">Transferase</keyword>
<keyword id="KW-0862">Zinc</keyword>